<accession>Q2FZ50</accession>
<reference key="1">
    <citation type="book" date="2006" name="Gram positive pathogens, 2nd edition">
        <title>The Staphylococcus aureus NCTC 8325 genome.</title>
        <editorList>
            <person name="Fischetti V."/>
            <person name="Novick R."/>
            <person name="Ferretti J."/>
            <person name="Portnoy D."/>
            <person name="Rood J."/>
        </editorList>
        <authorList>
            <person name="Gillaspy A.F."/>
            <person name="Worrell V."/>
            <person name="Orvis J."/>
            <person name="Roe B.A."/>
            <person name="Dyer D.W."/>
            <person name="Iandolo J.J."/>
        </authorList>
    </citation>
    <scope>NUCLEOTIDE SEQUENCE [LARGE SCALE GENOMIC DNA]</scope>
    <source>
        <strain>NCTC 8325 / PS 47</strain>
    </source>
</reference>
<feature type="chain" id="PRO_1000075829" description="Ribonuclease 3">
    <location>
        <begin position="1"/>
        <end position="243"/>
    </location>
</feature>
<feature type="domain" description="RNase III" evidence="1">
    <location>
        <begin position="10"/>
        <end position="146"/>
    </location>
</feature>
<feature type="domain" description="DRBM" evidence="1">
    <location>
        <begin position="172"/>
        <end position="241"/>
    </location>
</feature>
<feature type="region of interest" description="Disordered" evidence="2">
    <location>
        <begin position="219"/>
        <end position="243"/>
    </location>
</feature>
<feature type="compositionally biased region" description="Basic and acidic residues" evidence="2">
    <location>
        <begin position="219"/>
        <end position="231"/>
    </location>
</feature>
<feature type="active site" evidence="1">
    <location>
        <position position="63"/>
    </location>
</feature>
<feature type="active site" evidence="1">
    <location>
        <position position="135"/>
    </location>
</feature>
<feature type="binding site" evidence="1">
    <location>
        <position position="59"/>
    </location>
    <ligand>
        <name>Mg(2+)</name>
        <dbReference type="ChEBI" id="CHEBI:18420"/>
    </ligand>
</feature>
<feature type="binding site" evidence="1">
    <location>
        <position position="132"/>
    </location>
    <ligand>
        <name>Mg(2+)</name>
        <dbReference type="ChEBI" id="CHEBI:18420"/>
    </ligand>
</feature>
<feature type="binding site" evidence="1">
    <location>
        <position position="135"/>
    </location>
    <ligand>
        <name>Mg(2+)</name>
        <dbReference type="ChEBI" id="CHEBI:18420"/>
    </ligand>
</feature>
<proteinExistence type="inferred from homology"/>
<name>RNC_STAA8</name>
<comment type="function">
    <text evidence="1">Digests double-stranded RNA. Involved in the processing of primary rRNA transcript to yield the immediate precursors to the large and small rRNAs (23S and 16S). Processes some mRNAs, and tRNAs when they are encoded in the rRNA operon. Processes pre-crRNA and tracrRNA of type II CRISPR loci if present in the organism.</text>
</comment>
<comment type="catalytic activity">
    <reaction evidence="1">
        <text>Endonucleolytic cleavage to 5'-phosphomonoester.</text>
        <dbReference type="EC" id="3.1.26.3"/>
    </reaction>
</comment>
<comment type="cofactor">
    <cofactor evidence="1">
        <name>Mg(2+)</name>
        <dbReference type="ChEBI" id="CHEBI:18420"/>
    </cofactor>
</comment>
<comment type="subunit">
    <text evidence="1">Homodimer.</text>
</comment>
<comment type="subcellular location">
    <subcellularLocation>
        <location evidence="1">Cytoplasm</location>
    </subcellularLocation>
</comment>
<comment type="similarity">
    <text evidence="1">Belongs to the ribonuclease III family.</text>
</comment>
<sequence length="243" mass="27922">MSKQKKSEIVNRFRKRFDTKMTELGFTYQNIDLYQQAFSHSSFINDFNMNRLDHNERLEFLGDAVLELTVSRYLFDKHPNLPEGNLTKMRATIVCEPSLVIFANKIGLNEMILLGKGEEKTGGRTRPSLISDAFEAFIGALYLDQGLDIVWKFAEKVIFPHVEQNELLGVVDFKTQFQEYVHQQNKGDVTYNLIKEEGPAHHRLFTSEVILQGEAIAEGKGKTKKESEQRAAESAYKQLKQIK</sequence>
<organism>
    <name type="scientific">Staphylococcus aureus (strain NCTC 8325 / PS 47)</name>
    <dbReference type="NCBI Taxonomy" id="93061"/>
    <lineage>
        <taxon>Bacteria</taxon>
        <taxon>Bacillati</taxon>
        <taxon>Bacillota</taxon>
        <taxon>Bacilli</taxon>
        <taxon>Bacillales</taxon>
        <taxon>Staphylococcaceae</taxon>
        <taxon>Staphylococcus</taxon>
    </lineage>
</organism>
<protein>
    <recommendedName>
        <fullName evidence="1">Ribonuclease 3</fullName>
        <ecNumber evidence="1">3.1.26.3</ecNumber>
    </recommendedName>
    <alternativeName>
        <fullName evidence="1">Ribonuclease III</fullName>
        <shortName evidence="1">RNase III</shortName>
    </alternativeName>
</protein>
<dbReference type="EC" id="3.1.26.3" evidence="1"/>
<dbReference type="EMBL" id="CP000253">
    <property type="protein sequence ID" value="ABD30308.1"/>
    <property type="molecule type" value="Genomic_DNA"/>
</dbReference>
<dbReference type="RefSeq" id="WP_000043237.1">
    <property type="nucleotide sequence ID" value="NZ_LS483365.1"/>
</dbReference>
<dbReference type="RefSeq" id="YP_499740.1">
    <property type="nucleotide sequence ID" value="NC_007795.1"/>
</dbReference>
<dbReference type="SMR" id="Q2FZ50"/>
<dbReference type="STRING" id="93061.SAOUHSC_01203"/>
<dbReference type="PaxDb" id="1280-SAXN108_1233"/>
<dbReference type="GeneID" id="3919469"/>
<dbReference type="KEGG" id="sao:SAOUHSC_01203"/>
<dbReference type="PATRIC" id="fig|93061.5.peg.1103"/>
<dbReference type="eggNOG" id="COG0571">
    <property type="taxonomic scope" value="Bacteria"/>
</dbReference>
<dbReference type="HOGENOM" id="CLU_000907_1_3_9"/>
<dbReference type="OrthoDB" id="9805026at2"/>
<dbReference type="PRO" id="PR:Q2FZ50"/>
<dbReference type="Proteomes" id="UP000008816">
    <property type="component" value="Chromosome"/>
</dbReference>
<dbReference type="GO" id="GO:0005829">
    <property type="term" value="C:cytosol"/>
    <property type="evidence" value="ECO:0000318"/>
    <property type="project" value="GO_Central"/>
</dbReference>
<dbReference type="GO" id="GO:0003725">
    <property type="term" value="F:double-stranded RNA binding"/>
    <property type="evidence" value="ECO:0000318"/>
    <property type="project" value="GO_Central"/>
</dbReference>
<dbReference type="GO" id="GO:0046872">
    <property type="term" value="F:metal ion binding"/>
    <property type="evidence" value="ECO:0007669"/>
    <property type="project" value="UniProtKB-KW"/>
</dbReference>
<dbReference type="GO" id="GO:0004525">
    <property type="term" value="F:ribonuclease III activity"/>
    <property type="evidence" value="ECO:0000318"/>
    <property type="project" value="GO_Central"/>
</dbReference>
<dbReference type="GO" id="GO:0019843">
    <property type="term" value="F:rRNA binding"/>
    <property type="evidence" value="ECO:0007669"/>
    <property type="project" value="UniProtKB-KW"/>
</dbReference>
<dbReference type="GO" id="GO:0006397">
    <property type="term" value="P:mRNA processing"/>
    <property type="evidence" value="ECO:0007669"/>
    <property type="project" value="UniProtKB-UniRule"/>
</dbReference>
<dbReference type="GO" id="GO:0010468">
    <property type="term" value="P:regulation of gene expression"/>
    <property type="evidence" value="ECO:0000318"/>
    <property type="project" value="GO_Central"/>
</dbReference>
<dbReference type="GO" id="GO:0006396">
    <property type="term" value="P:RNA processing"/>
    <property type="evidence" value="ECO:0000318"/>
    <property type="project" value="GO_Central"/>
</dbReference>
<dbReference type="GO" id="GO:0006364">
    <property type="term" value="P:rRNA processing"/>
    <property type="evidence" value="ECO:0007669"/>
    <property type="project" value="UniProtKB-UniRule"/>
</dbReference>
<dbReference type="GO" id="GO:0008033">
    <property type="term" value="P:tRNA processing"/>
    <property type="evidence" value="ECO:0007669"/>
    <property type="project" value="UniProtKB-KW"/>
</dbReference>
<dbReference type="CDD" id="cd10845">
    <property type="entry name" value="DSRM_RNAse_III_family"/>
    <property type="match status" value="1"/>
</dbReference>
<dbReference type="CDD" id="cd00593">
    <property type="entry name" value="RIBOc"/>
    <property type="match status" value="1"/>
</dbReference>
<dbReference type="FunFam" id="1.10.1520.10:FF:000001">
    <property type="entry name" value="Ribonuclease 3"/>
    <property type="match status" value="1"/>
</dbReference>
<dbReference type="FunFam" id="3.30.160.20:FF:000003">
    <property type="entry name" value="Ribonuclease 3"/>
    <property type="match status" value="1"/>
</dbReference>
<dbReference type="Gene3D" id="3.30.160.20">
    <property type="match status" value="1"/>
</dbReference>
<dbReference type="Gene3D" id="1.10.1520.10">
    <property type="entry name" value="Ribonuclease III domain"/>
    <property type="match status" value="1"/>
</dbReference>
<dbReference type="HAMAP" id="MF_00104">
    <property type="entry name" value="RNase_III"/>
    <property type="match status" value="1"/>
</dbReference>
<dbReference type="InterPro" id="IPR014720">
    <property type="entry name" value="dsRBD_dom"/>
</dbReference>
<dbReference type="InterPro" id="IPR011907">
    <property type="entry name" value="RNase_III"/>
</dbReference>
<dbReference type="InterPro" id="IPR000999">
    <property type="entry name" value="RNase_III_dom"/>
</dbReference>
<dbReference type="InterPro" id="IPR036389">
    <property type="entry name" value="RNase_III_sf"/>
</dbReference>
<dbReference type="NCBIfam" id="TIGR02191">
    <property type="entry name" value="RNaseIII"/>
    <property type="match status" value="1"/>
</dbReference>
<dbReference type="PANTHER" id="PTHR11207:SF0">
    <property type="entry name" value="RIBONUCLEASE 3"/>
    <property type="match status" value="1"/>
</dbReference>
<dbReference type="PANTHER" id="PTHR11207">
    <property type="entry name" value="RIBONUCLEASE III"/>
    <property type="match status" value="1"/>
</dbReference>
<dbReference type="Pfam" id="PF00035">
    <property type="entry name" value="dsrm"/>
    <property type="match status" value="1"/>
</dbReference>
<dbReference type="Pfam" id="PF14622">
    <property type="entry name" value="Ribonucleas_3_3"/>
    <property type="match status" value="1"/>
</dbReference>
<dbReference type="SMART" id="SM00358">
    <property type="entry name" value="DSRM"/>
    <property type="match status" value="1"/>
</dbReference>
<dbReference type="SMART" id="SM00535">
    <property type="entry name" value="RIBOc"/>
    <property type="match status" value="1"/>
</dbReference>
<dbReference type="SUPFAM" id="SSF54768">
    <property type="entry name" value="dsRNA-binding domain-like"/>
    <property type="match status" value="1"/>
</dbReference>
<dbReference type="SUPFAM" id="SSF69065">
    <property type="entry name" value="RNase III domain-like"/>
    <property type="match status" value="1"/>
</dbReference>
<dbReference type="PROSITE" id="PS50137">
    <property type="entry name" value="DS_RBD"/>
    <property type="match status" value="1"/>
</dbReference>
<dbReference type="PROSITE" id="PS00517">
    <property type="entry name" value="RNASE_3_1"/>
    <property type="match status" value="1"/>
</dbReference>
<dbReference type="PROSITE" id="PS50142">
    <property type="entry name" value="RNASE_3_2"/>
    <property type="match status" value="1"/>
</dbReference>
<evidence type="ECO:0000255" key="1">
    <source>
        <dbReference type="HAMAP-Rule" id="MF_00104"/>
    </source>
</evidence>
<evidence type="ECO:0000256" key="2">
    <source>
        <dbReference type="SAM" id="MobiDB-lite"/>
    </source>
</evidence>
<keyword id="KW-0963">Cytoplasm</keyword>
<keyword id="KW-0255">Endonuclease</keyword>
<keyword id="KW-0378">Hydrolase</keyword>
<keyword id="KW-0460">Magnesium</keyword>
<keyword id="KW-0479">Metal-binding</keyword>
<keyword id="KW-0507">mRNA processing</keyword>
<keyword id="KW-0540">Nuclease</keyword>
<keyword id="KW-1185">Reference proteome</keyword>
<keyword id="KW-0694">RNA-binding</keyword>
<keyword id="KW-0698">rRNA processing</keyword>
<keyword id="KW-0699">rRNA-binding</keyword>
<keyword id="KW-0819">tRNA processing</keyword>
<gene>
    <name evidence="1" type="primary">rnc</name>
    <name type="ordered locus">SAOUHSC_01203</name>
</gene>